<dbReference type="EMBL" id="AF181077">
    <property type="protein sequence ID" value="AAD53956.1"/>
    <property type="molecule type" value="mRNA"/>
</dbReference>
<dbReference type="EMBL" id="AF184276">
    <property type="protein sequence ID" value="AAF02721.1"/>
    <property type="molecule type" value="mRNA"/>
</dbReference>
<dbReference type="RefSeq" id="NP_001268254.1">
    <property type="nucleotide sequence ID" value="NM_001281325.1"/>
</dbReference>
<dbReference type="SMR" id="Q9QZJ5"/>
<dbReference type="STRING" id="10036.ENSMAUP00000005000"/>
<dbReference type="GlyCosmos" id="Q9QZJ5">
    <property type="glycosylation" value="2 sites, No reported glycans"/>
</dbReference>
<dbReference type="GeneID" id="101825539"/>
<dbReference type="KEGG" id="maua:101825539"/>
<dbReference type="CTD" id="2099"/>
<dbReference type="eggNOG" id="KOG3575">
    <property type="taxonomic scope" value="Eukaryota"/>
</dbReference>
<dbReference type="OrthoDB" id="5799427at2759"/>
<dbReference type="Proteomes" id="UP000189706">
    <property type="component" value="Unplaced"/>
</dbReference>
<dbReference type="GO" id="GO:0005737">
    <property type="term" value="C:cytoplasm"/>
    <property type="evidence" value="ECO:0000250"/>
    <property type="project" value="UniProtKB"/>
</dbReference>
<dbReference type="GO" id="GO:0005794">
    <property type="term" value="C:Golgi apparatus"/>
    <property type="evidence" value="ECO:0007669"/>
    <property type="project" value="UniProtKB-SubCell"/>
</dbReference>
<dbReference type="GO" id="GO:0005634">
    <property type="term" value="C:nucleus"/>
    <property type="evidence" value="ECO:0000250"/>
    <property type="project" value="UniProtKB"/>
</dbReference>
<dbReference type="GO" id="GO:0005886">
    <property type="term" value="C:plasma membrane"/>
    <property type="evidence" value="ECO:0007669"/>
    <property type="project" value="UniProtKB-SubCell"/>
</dbReference>
<dbReference type="GO" id="GO:0030284">
    <property type="term" value="F:nuclear estrogen receptor activity"/>
    <property type="evidence" value="ECO:0007669"/>
    <property type="project" value="InterPro"/>
</dbReference>
<dbReference type="GO" id="GO:0043565">
    <property type="term" value="F:sequence-specific DNA binding"/>
    <property type="evidence" value="ECO:0000250"/>
    <property type="project" value="UniProtKB"/>
</dbReference>
<dbReference type="GO" id="GO:0005496">
    <property type="term" value="F:steroid binding"/>
    <property type="evidence" value="ECO:0000250"/>
    <property type="project" value="UniProtKB"/>
</dbReference>
<dbReference type="GO" id="GO:0008270">
    <property type="term" value="F:zinc ion binding"/>
    <property type="evidence" value="ECO:0007669"/>
    <property type="project" value="UniProtKB-KW"/>
</dbReference>
<dbReference type="GO" id="GO:0071392">
    <property type="term" value="P:cellular response to estradiol stimulus"/>
    <property type="evidence" value="ECO:0000250"/>
    <property type="project" value="UniProtKB"/>
</dbReference>
<dbReference type="GO" id="GO:0043124">
    <property type="term" value="P:negative regulation of canonical NF-kappaB signal transduction"/>
    <property type="evidence" value="ECO:0000250"/>
    <property type="project" value="UniProtKB"/>
</dbReference>
<dbReference type="GO" id="GO:0043433">
    <property type="term" value="P:negative regulation of DNA-binding transcription factor activity"/>
    <property type="evidence" value="ECO:0000250"/>
    <property type="project" value="UniProtKB"/>
</dbReference>
<dbReference type="GO" id="GO:0034392">
    <property type="term" value="P:negative regulation of smooth muscle cell apoptotic process"/>
    <property type="evidence" value="ECO:0000250"/>
    <property type="project" value="UniProtKB"/>
</dbReference>
<dbReference type="GO" id="GO:0030518">
    <property type="term" value="P:nuclear receptor-mediated steroid hormone signaling pathway"/>
    <property type="evidence" value="ECO:0000250"/>
    <property type="project" value="UniProtKB"/>
</dbReference>
<dbReference type="GO" id="GO:0007200">
    <property type="term" value="P:phospholipase C-activating G protein-coupled receptor signaling pathway"/>
    <property type="evidence" value="ECO:0000250"/>
    <property type="project" value="UniProtKB"/>
</dbReference>
<dbReference type="GO" id="GO:0007204">
    <property type="term" value="P:positive regulation of cytosolic calcium ion concentration"/>
    <property type="evidence" value="ECO:0000250"/>
    <property type="project" value="UniProtKB"/>
</dbReference>
<dbReference type="GO" id="GO:0051091">
    <property type="term" value="P:positive regulation of DNA-binding transcription factor activity"/>
    <property type="evidence" value="ECO:0000250"/>
    <property type="project" value="UniProtKB"/>
</dbReference>
<dbReference type="GO" id="GO:0045893">
    <property type="term" value="P:positive regulation of DNA-templated transcription"/>
    <property type="evidence" value="ECO:0000250"/>
    <property type="project" value="UniProtKB"/>
</dbReference>
<dbReference type="GO" id="GO:0045429">
    <property type="term" value="P:positive regulation of nitric oxide biosynthetic process"/>
    <property type="evidence" value="ECO:0000250"/>
    <property type="project" value="UniProtKB"/>
</dbReference>
<dbReference type="GO" id="GO:0051000">
    <property type="term" value="P:positive regulation of nitric-oxide synthase activity"/>
    <property type="evidence" value="ECO:0000250"/>
    <property type="project" value="UniProtKB"/>
</dbReference>
<dbReference type="CDD" id="cd07171">
    <property type="entry name" value="NR_DBD_ER"/>
    <property type="match status" value="1"/>
</dbReference>
<dbReference type="CDD" id="cd06949">
    <property type="entry name" value="NR_LBD_ER"/>
    <property type="match status" value="1"/>
</dbReference>
<dbReference type="FunFam" id="1.10.565.10:FF:000010">
    <property type="entry name" value="Estrogen receptor"/>
    <property type="match status" value="1"/>
</dbReference>
<dbReference type="FunFam" id="3.30.50.10:FF:000014">
    <property type="entry name" value="Estrogen receptor beta"/>
    <property type="match status" value="1"/>
</dbReference>
<dbReference type="Gene3D" id="3.30.50.10">
    <property type="entry name" value="Erythroid Transcription Factor GATA-1, subunit A"/>
    <property type="match status" value="1"/>
</dbReference>
<dbReference type="Gene3D" id="1.10.565.10">
    <property type="entry name" value="Retinoid X Receptor"/>
    <property type="match status" value="1"/>
</dbReference>
<dbReference type="InterPro" id="IPR024178">
    <property type="entry name" value="Est_rcpt/est-rel_rcp"/>
</dbReference>
<dbReference type="InterPro" id="IPR001292">
    <property type="entry name" value="Estr_rcpt"/>
</dbReference>
<dbReference type="InterPro" id="IPR046944">
    <property type="entry name" value="Estr_rcpt_N"/>
</dbReference>
<dbReference type="InterPro" id="IPR035500">
    <property type="entry name" value="NHR-like_dom_sf"/>
</dbReference>
<dbReference type="InterPro" id="IPR000536">
    <property type="entry name" value="Nucl_hrmn_rcpt_lig-bd"/>
</dbReference>
<dbReference type="InterPro" id="IPR050200">
    <property type="entry name" value="Nuclear_hormone_rcpt_NR3"/>
</dbReference>
<dbReference type="InterPro" id="IPR001723">
    <property type="entry name" value="Nuclear_hrmn_rcpt"/>
</dbReference>
<dbReference type="InterPro" id="IPR024736">
    <property type="entry name" value="Oestrogen-typ_rcpt_final_C_dom"/>
</dbReference>
<dbReference type="InterPro" id="IPR001628">
    <property type="entry name" value="Znf_hrmn_rcpt"/>
</dbReference>
<dbReference type="InterPro" id="IPR013088">
    <property type="entry name" value="Znf_NHR/GATA"/>
</dbReference>
<dbReference type="PANTHER" id="PTHR48092">
    <property type="entry name" value="KNIRPS-RELATED PROTEIN-RELATED"/>
    <property type="match status" value="1"/>
</dbReference>
<dbReference type="Pfam" id="PF12743">
    <property type="entry name" value="ESR1_C"/>
    <property type="match status" value="1"/>
</dbReference>
<dbReference type="Pfam" id="PF00104">
    <property type="entry name" value="Hormone_recep"/>
    <property type="match status" value="1"/>
</dbReference>
<dbReference type="Pfam" id="PF02159">
    <property type="entry name" value="Oest_recep"/>
    <property type="match status" value="1"/>
</dbReference>
<dbReference type="Pfam" id="PF00105">
    <property type="entry name" value="zf-C4"/>
    <property type="match status" value="1"/>
</dbReference>
<dbReference type="PIRSF" id="PIRSF500101">
    <property type="entry name" value="ER-a"/>
    <property type="match status" value="1"/>
</dbReference>
<dbReference type="PIRSF" id="PIRSF002527">
    <property type="entry name" value="ER-like_NR"/>
    <property type="match status" value="1"/>
</dbReference>
<dbReference type="PRINTS" id="PR00543">
    <property type="entry name" value="OESTROGENR"/>
</dbReference>
<dbReference type="PRINTS" id="PR00398">
    <property type="entry name" value="STRDHORMONER"/>
</dbReference>
<dbReference type="PRINTS" id="PR00047">
    <property type="entry name" value="STROIDFINGER"/>
</dbReference>
<dbReference type="SMART" id="SM00430">
    <property type="entry name" value="HOLI"/>
    <property type="match status" value="1"/>
</dbReference>
<dbReference type="SMART" id="SM00399">
    <property type="entry name" value="ZnF_C4"/>
    <property type="match status" value="1"/>
</dbReference>
<dbReference type="SUPFAM" id="SSF57716">
    <property type="entry name" value="Glucocorticoid receptor-like (DNA-binding domain)"/>
    <property type="match status" value="1"/>
</dbReference>
<dbReference type="SUPFAM" id="SSF48508">
    <property type="entry name" value="Nuclear receptor ligand-binding domain"/>
    <property type="match status" value="1"/>
</dbReference>
<dbReference type="PROSITE" id="PS51843">
    <property type="entry name" value="NR_LBD"/>
    <property type="match status" value="1"/>
</dbReference>
<dbReference type="PROSITE" id="PS00031">
    <property type="entry name" value="NUCLEAR_REC_DBD_1"/>
    <property type="match status" value="1"/>
</dbReference>
<dbReference type="PROSITE" id="PS51030">
    <property type="entry name" value="NUCLEAR_REC_DBD_2"/>
    <property type="match status" value="1"/>
</dbReference>
<reference key="1">
    <citation type="journal article" date="2000" name="J. Steroid Biochem. Mol. Biol.">
        <title>Hamster estrogen receptor cDNA: cloning and mRNA expression.</title>
        <authorList>
            <person name="Bhat H.K."/>
            <person name="Vadgama J.V."/>
        </authorList>
    </citation>
    <scope>NUCLEOTIDE SEQUENCE [MRNA]</scope>
    <source>
        <tissue>Uterus</tissue>
    </source>
</reference>
<reference key="2">
    <citation type="submission" date="1999-09" db="EMBL/GenBank/DDBJ databases">
        <title>Return of lordosis after food deprivation and refeeding in Syrian hamsters.</title>
        <authorList>
            <person name="Jones J.E."/>
            <person name="Carpenter C.D."/>
            <person name="Lubbers L.S."/>
            <person name="Petersen S.L."/>
            <person name="Wade G.N."/>
        </authorList>
    </citation>
    <scope>NUCLEOTIDE SEQUENCE [MRNA] OF 98-291</scope>
</reference>
<evidence type="ECO:0000250" key="1"/>
<evidence type="ECO:0000250" key="2">
    <source>
        <dbReference type="UniProtKB" id="P03372"/>
    </source>
</evidence>
<evidence type="ECO:0000250" key="3">
    <source>
        <dbReference type="UniProtKB" id="P06211"/>
    </source>
</evidence>
<evidence type="ECO:0000250" key="4">
    <source>
        <dbReference type="UniProtKB" id="P19785"/>
    </source>
</evidence>
<evidence type="ECO:0000255" key="5">
    <source>
        <dbReference type="PROSITE-ProRule" id="PRU00407"/>
    </source>
</evidence>
<evidence type="ECO:0000255" key="6">
    <source>
        <dbReference type="PROSITE-ProRule" id="PRU01189"/>
    </source>
</evidence>
<evidence type="ECO:0000256" key="7">
    <source>
        <dbReference type="SAM" id="MobiDB-lite"/>
    </source>
</evidence>
<evidence type="ECO:0000305" key="8"/>
<protein>
    <recommendedName>
        <fullName>Estrogen receptor</fullName>
        <shortName>ER</shortName>
    </recommendedName>
    <alternativeName>
        <fullName>ER-alpha</fullName>
    </alternativeName>
    <alternativeName>
        <fullName>Estradiol receptor</fullName>
    </alternativeName>
    <alternativeName>
        <fullName>Nuclear receptor subfamily 3 group A member 1</fullName>
    </alternativeName>
</protein>
<organism>
    <name type="scientific">Mesocricetus auratus</name>
    <name type="common">Golden hamster</name>
    <dbReference type="NCBI Taxonomy" id="10036"/>
    <lineage>
        <taxon>Eukaryota</taxon>
        <taxon>Metazoa</taxon>
        <taxon>Chordata</taxon>
        <taxon>Craniata</taxon>
        <taxon>Vertebrata</taxon>
        <taxon>Euteleostomi</taxon>
        <taxon>Mammalia</taxon>
        <taxon>Eutheria</taxon>
        <taxon>Euarchontoglires</taxon>
        <taxon>Glires</taxon>
        <taxon>Rodentia</taxon>
        <taxon>Myomorpha</taxon>
        <taxon>Muroidea</taxon>
        <taxon>Cricetidae</taxon>
        <taxon>Cricetinae</taxon>
        <taxon>Mesocricetus</taxon>
    </lineage>
</organism>
<accession>Q9QZJ5</accession>
<accession>Q9QZG6</accession>
<sequence length="595" mass="66834">MTMTLHTKASGMALLHQIQGNELEPLSRPQLKMPLERALSEVYVDSSKPAMFNYPEGAAYEFNAATAPAPVYGQTGIAYGSGSEATAFGSNSLGLFPQLNSVSPSPLMLLHPPPPQLSPFLHPHGQQVPYYLENEPSAYAVRDSGPPAFYRSNSDNRRQSGRERLSSSSEKGSMAMESVKETRYCAVCNDYASGYHYGVWSCEGCKAFFKRSIQGHNDYMCPATNQCTIDKNRRKSCQACRLRKCYEVGMMKGGIRKDRRGGRMLKHKRQRDDLEGRNDMGPSGDMRATNLWPSPLVIKHTKKNSPALSLTADQMVSALLDAEPPLIYSEYDPSRPFSEASMMGLLTNLADRELVHMINWAKRVPGFGDLNLHDQVHLLECAWLEILMIGLIWRSMEHPGKLLFAPNLLLDRNQGKCVEGMVEIFDMLLATSARFRMMDLQGEEFVCLKSIILLNSGVYTFLSSTLKSLEEKDHIHRVLDKITDTLIHLMAKAGLTLQQQHRRLAQLLLILSHIRHMSNKGMEHLYNMKCKNVVPFYDLLLEMLDAHRLHTPVSRMGVSPEEPSQSQLTTTNSTSSHSLQTYYIPSEAESFPNTI</sequence>
<keyword id="KW-0010">Activator</keyword>
<keyword id="KW-1003">Cell membrane</keyword>
<keyword id="KW-0963">Cytoplasm</keyword>
<keyword id="KW-0238">DNA-binding</keyword>
<keyword id="KW-0325">Glycoprotein</keyword>
<keyword id="KW-0333">Golgi apparatus</keyword>
<keyword id="KW-0446">Lipid-binding</keyword>
<keyword id="KW-0449">Lipoprotein</keyword>
<keyword id="KW-0472">Membrane</keyword>
<keyword id="KW-0479">Metal-binding</keyword>
<keyword id="KW-0488">Methylation</keyword>
<keyword id="KW-0539">Nucleus</keyword>
<keyword id="KW-0564">Palmitate</keyword>
<keyword id="KW-0597">Phosphoprotein</keyword>
<keyword id="KW-0675">Receptor</keyword>
<keyword id="KW-1185">Reference proteome</keyword>
<keyword id="KW-0754">Steroid-binding</keyword>
<keyword id="KW-0804">Transcription</keyword>
<keyword id="KW-0805">Transcription regulation</keyword>
<keyword id="KW-0832">Ubl conjugation</keyword>
<keyword id="KW-0862">Zinc</keyword>
<keyword id="KW-0863">Zinc-finger</keyword>
<feature type="chain" id="PRO_0000053620" description="Estrogen receptor">
    <location>
        <begin position="1"/>
        <end position="595"/>
    </location>
</feature>
<feature type="domain" description="NR LBD" evidence="6">
    <location>
        <begin position="311"/>
        <end position="547"/>
    </location>
</feature>
<feature type="DNA-binding region" description="Nuclear receptor" evidence="5">
    <location>
        <begin position="185"/>
        <end position="250"/>
    </location>
</feature>
<feature type="zinc finger region" description="NR C4-type" evidence="5">
    <location>
        <begin position="185"/>
        <end position="205"/>
    </location>
</feature>
<feature type="zinc finger region" description="NR C4-type" evidence="5">
    <location>
        <begin position="221"/>
        <end position="245"/>
    </location>
</feature>
<feature type="region of interest" description="Modulating(transactivation AF-1); mediates interaction with MACROD1" evidence="1">
    <location>
        <begin position="1"/>
        <end position="184"/>
    </location>
</feature>
<feature type="region of interest" description="Interaction with DDX5; self-association" evidence="1">
    <location>
        <begin position="35"/>
        <end position="174"/>
    </location>
</feature>
<feature type="region of interest" description="Required for interaction with NCOA1" evidence="1">
    <location>
        <begin position="35"/>
        <end position="47"/>
    </location>
</feature>
<feature type="region of interest" description="Disordered" evidence="7">
    <location>
        <begin position="143"/>
        <end position="174"/>
    </location>
</feature>
<feature type="region of interest" description="Mediates interaction with DNTTIP2" evidence="1">
    <location>
        <begin position="185"/>
        <end position="310"/>
    </location>
</feature>
<feature type="region of interest" description="Hinge">
    <location>
        <begin position="251"/>
        <end position="310"/>
    </location>
</feature>
<feature type="region of interest" description="Disordered" evidence="7">
    <location>
        <begin position="260"/>
        <end position="285"/>
    </location>
</feature>
<feature type="region of interest" description="Interaction with AKAP13" evidence="1">
    <location>
        <begin position="262"/>
        <end position="595"/>
    </location>
</feature>
<feature type="region of interest" description="Self-association" evidence="1">
    <location>
        <begin position="264"/>
        <end position="595"/>
    </location>
</feature>
<feature type="region of interest" description="Transactivation AF-2" evidence="1">
    <location>
        <begin position="311"/>
        <end position="595"/>
    </location>
</feature>
<feature type="region of interest" description="Disordered" evidence="7">
    <location>
        <begin position="554"/>
        <end position="578"/>
    </location>
</feature>
<feature type="compositionally biased region" description="Basic and acidic residues" evidence="7">
    <location>
        <begin position="154"/>
        <end position="165"/>
    </location>
</feature>
<feature type="compositionally biased region" description="Basic residues" evidence="7">
    <location>
        <begin position="260"/>
        <end position="269"/>
    </location>
</feature>
<feature type="compositionally biased region" description="Low complexity" evidence="7">
    <location>
        <begin position="564"/>
        <end position="578"/>
    </location>
</feature>
<feature type="binding site" evidence="2">
    <location>
        <position position="353"/>
    </location>
    <ligand>
        <name>17beta-estradiol</name>
        <dbReference type="ChEBI" id="CHEBI:16469"/>
    </ligand>
</feature>
<feature type="binding site" evidence="2">
    <location>
        <position position="394"/>
    </location>
    <ligand>
        <name>17beta-estradiol</name>
        <dbReference type="ChEBI" id="CHEBI:16469"/>
    </ligand>
</feature>
<feature type="binding site" evidence="2">
    <location>
        <position position="524"/>
    </location>
    <ligand>
        <name>17beta-estradiol</name>
        <dbReference type="ChEBI" id="CHEBI:16469"/>
    </ligand>
</feature>
<feature type="modified residue" description="Phosphoserine; by CDK2" evidence="2">
    <location>
        <position position="103"/>
    </location>
</feature>
<feature type="modified residue" description="Phosphoserine; by CDK2" evidence="2">
    <location>
        <position position="105"/>
    </location>
</feature>
<feature type="modified residue" description="Phosphoserine" evidence="2">
    <location>
        <position position="118"/>
    </location>
</feature>
<feature type="modified residue" description="Phosphoserine; by CK2" evidence="2">
    <location>
        <position position="167"/>
    </location>
</feature>
<feature type="modified residue" description="Asymmetric dimethylarginine; by PRMT1" evidence="2">
    <location>
        <position position="260"/>
    </location>
</feature>
<feature type="modified residue" description="Phosphotyrosine; by Tyr-kinases" evidence="2">
    <location>
        <position position="537"/>
    </location>
</feature>
<feature type="lipid moiety-binding region" description="S-palmitoyl cysteine" evidence="1">
    <location>
        <position position="447"/>
    </location>
</feature>
<feature type="glycosylation site" description="O-linked (GlcNAc) serine" evidence="1">
    <location>
        <position position="10"/>
    </location>
</feature>
<feature type="glycosylation site" description="O-linked (GlcNAc) threonine" evidence="1">
    <location>
        <position position="571"/>
    </location>
</feature>
<feature type="sequence conflict" description="In Ref. 2; AAF02721." evidence="8" ref="2">
    <original>QL</original>
    <variation>PF</variation>
    <location>
        <begin position="98"/>
        <end position="99"/>
    </location>
</feature>
<feature type="sequence conflict" description="In Ref. 2; AAF02721." evidence="8" ref="2">
    <original>S</original>
    <variation>T</variation>
    <location>
        <position position="144"/>
    </location>
</feature>
<feature type="sequence conflict" description="In Ref. 2; AAF02721." evidence="8" ref="2">
    <original>GV</original>
    <variation>EVEQI</variation>
    <location>
        <begin position="198"/>
        <end position="199"/>
    </location>
</feature>
<feature type="sequence conflict" description="In Ref. 2; AAF02721." evidence="8" ref="2">
    <original>NL</original>
    <variation>KG</variation>
    <location>
        <begin position="290"/>
        <end position="291"/>
    </location>
</feature>
<name>ESR1_MESAU</name>
<comment type="function">
    <text evidence="1 3">Nuclear hormone receptor. The steroid hormones and their receptors are involved in the regulation of eukaryotic gene expression and affect cellular proliferation and differentiation in target tissues. Ligand-dependent nuclear transactivation involves either direct homodimer binding to a palindromic estrogen response element (ERE) sequence or association with other DNA-binding transcription factors, such as AP-1/c-Jun, c-Fos, ATF-2, Sp1 and Sp3, to mediate ERE-independent signaling. Ligand binding induces a conformational change allowing subsequent or combinatorial association with multiprotein coactivator complexes through LXXLL motifs of their respective components. Mutual transrepression occurs between the estrogen receptor (ER) and NF-kappa-B in a cell-type specific manner. Decreases NF-kappa-B DNA-binding activity and inhibits NF-kappa-B-mediated transcription from the IL6 promoter and displace RELA/p65 and associated coregulators from the promoter. Recruited to the NF-kappa-B response element of the CCL2 and IL8 promoters and can displace CREBBP. Present with NF-kappa-B components RELA/p65 and NFKB1/p50 on ERE sequences. Can also act synergistically with NF-kappa-B to activate transcription involving respective recruitment adjacent response elements; the function involves CREBBP. Can activate the transcriptional activity of TFF1. Also mediates membrane-initiated estrogen signaling involving various kinase cascades. Essential for MTA1-mediated transcriptional regulation of BRCA1 and BCAS3 (By similarity). Maintains neuronal survival in response to ischemic reperfusion injury when in the presence of circulating estradiol (17-beta-estradiol/E2) (By similarity).</text>
</comment>
<comment type="subunit">
    <text evidence="2 3 4">Binds DNA as a homodimer. Can form a heterodimer with ESR2. Interacts with coactivator NCOA5. Interacts with PELP1, the interaction is enhanced by 17-beta-estradiol; the interaction increases ESR1 transcriptional activity (By similarity). Interacts with NCOA7; the interaction is ligand-inducible. Interacts with AKAP13, CUEDC2, HEXIM1, KDM5A, MAP1S, SMARD1, and UBE1C. Interacts with MUC1; the interaction is stimulated by 7 beta-estradiol (E2) and enhances ESR1-mediated transcription. Interacts with DNTTIP2, and UIMC1. Interacts with KMT2D/MLL2. Interacts with ATAD2; the interaction is enhanced by estradiol. Interacts with KIF18A and LDB1. Interacts with RLIM (via its C-terminus). Interacts with MACROD1. Interacts with SH2D4A and PLCG. Interacts with SH2D4A; the interaction blocks binding to PLCG and inhibits estrogen-induced cell proliferation. Interacts with DYNLL1. Interacts with CCDC62; the interaction requires estradiol and appears to enhance the transcription of target genes. Interacts with NR2C1; the interaction prevents homodimerization of ESR1 and suppresses its transcriptional activity and cell growth. Interacts with DNAAF4. Interacts with PRMT2. Interacts with RBFOX2. Interacts with EP300; the interaction is estrogen-dependent and enhanced by CITED1. Interacts with CITED1; the interaction is estrogen-dependent. Interacts with FAM120B, FOXL2, PHB2 and SLC30A9. Interacts with coactivators NCOA3 and NCOA6. Interacts with STK3/MST2 only in the presence of SAV1 and vice-versa. Binds to CSNK1D. Interacts with NCOA2; NCOA2 can interact with ESR1 AF-1 and AF-2 domains simultaneously and mediate their transcriptional synergy. Interacts with DDX5. Interacts with NCOA1; the interaction seems to require a self-association of N-terminal and C-terminal regions. Interacts with ZNF366, DDX17, NFKB1, RELA, SP1 and SP3. Interacts with NRIP1. Interacts with GPER1; the interaction occurs in an estrogen-dependent manner. Interacts with CLOCK and the interaction is stimulated by estrogen. Interacts with TRIP4 (ufmylated); estrogen dependent. Interacts with LMTK3; the interaction phosphorylates ESR1 (in vitro) and protects it against proteasomal degradation. Interacts with CCAR2 (via N-terminus) in a ligand-independent manner. Interacts with ZFHX3. Interacts with SFR1 in a ligand-dependent and -independent manner. Interacts with DCAF13, LATS1 and DCAF1; regulates ESR1 ubiquitination and ubiquitin-mediated proteasomal degradation. Interacts (via DNA-binding domain) with POU4F2 (C-terminus); this interaction increases the estrogen receptor ESR1 transcriptional activity in a DNA- and ligand 17-beta-estradiol-independent manner. Interacts with ESRRB isoform 1. Interacts with UBE3A and WBP2. Interacts with GTF2B. Interacts with RBM39. In the absence of hormonal ligand, interacts with TACC1 (By similarity). Interacts with PI3KR1 or PI3KR2 and PTK2/FAK1 (By similarity). Interacts with SRC (By similarity). Interacts with BAG1; the interaction is promoted in the absence of estradiol (17-beta-estradiol/E2) (By similarity). Interacts with and ubiquitinated by STUB1; the interaction is promoted in the absence of estradiol (17-beta-estradiol/E2) (By similarity). Interacts with NEDD8 (By similarity).</text>
</comment>
<comment type="subcellular location">
    <subcellularLocation>
        <location evidence="5">Nucleus</location>
    </subcellularLocation>
    <subcellularLocation>
        <location evidence="1">Cytoplasm</location>
    </subcellularLocation>
    <subcellularLocation>
        <location evidence="1">Golgi apparatus</location>
    </subcellularLocation>
    <subcellularLocation>
        <location evidence="1">Cell membrane</location>
    </subcellularLocation>
    <text evidence="1">Colocalizes with ZDHHC7 and ZDHHC21 in the Golgi apparatus where most probably palmitoylation occurs. Associated with the plasma membrane when palmitoylated.</text>
</comment>
<comment type="domain">
    <text evidence="1">Composed of three domains: a modulating N-terminal domain, a DNA-binding domain and a C-terminal ligand-binding domain. The modulating domain, also known as A/B or AF-1 domain has a ligand-independent transactivation function. The C-terminus contains a ligand-dependent transactivation domain, also known as E/F or AF-2 domain which overlaps with the ligand binding domain. AF-1 and AF-2 activate transcription independently and synergistically and act in a promoter- and cell-specific manner (By similarity).</text>
</comment>
<comment type="PTM">
    <text evidence="2 3">Ubiquitinated; regulated by LATS1 via DCAF1 it leads to ESR1 proteasomal degradation. Deubiquitinated by OTUB1 (By similarity). Ubiquitinated by STUB1/CHIP; in the CA1 hippocampal region following loss of endogenous circulating estradiol (17-beta-estradiol/E2) (By similarity). Ubiquitinated by UBR5, leading to its degradation: UBR5 specifically recognizes and binds ligand-bound ESR1 when it is not associated with coactivators (NCOAs). In presence of NCOAs, the UBR5-degron is not accessible, preventing its ubiquitination and degradation (By similarity).</text>
</comment>
<comment type="PTM">
    <text evidence="2">Phosphorylated by cyclin A/CDK2 and CK1. Phosphorylation probably enhances transcriptional activity. Dephosphorylation at Ser-118 by PPP5C inhibits its transactivation activity (By similarity). Phosphorylated by LMTK3 (in vitro) (By similarity).</text>
</comment>
<comment type="PTM">
    <text evidence="1">Palmitoylated at Cys-447 by ZDHHC7 and ZDHHC21. Palmitoylation is required for plasma membrane targeting and for rapid intracellular signaling via ERK and AKT kinases and cAMP generation, but not for signaling mediated by the nuclear hormone receptor (By similarity).</text>
</comment>
<comment type="PTM">
    <text evidence="2">Dimethylated by PRMT1 at Arg-260. The methylation may favor cytoplasmic localization. Demethylated by JMJD6 at Arg-260.</text>
</comment>
<comment type="similarity">
    <text evidence="8">Belongs to the nuclear hormone receptor family. NR3 subfamily.</text>
</comment>
<proteinExistence type="evidence at transcript level"/>
<gene>
    <name type="primary">ESR1</name>
    <name type="synonym">ESR</name>
    <name type="synonym">NR3A1</name>
</gene>